<sequence length="788" mass="87565">MKPTTRCPFDYLVSQCGKHHFKTFVQLLSPLLQDEDPDRYALILDIMDAVHFSAILIDDIANQSALRRNQPAAHVVFGETETATRAYLVLLRVVNRTMRENPVLAGELLNSLEEIHQGQDESLVWRRDGLETFPVADDERLAAYVRMSRLKTGSLFVLLGRLLANGGTEFDDLLVRFGLYAQLQHDCKNIYSPEYALNKGSVAEDLRNGELSYPVVVALIENKAEGIVGEALRTRSDGDTEQALRVLESPAVKDACLHALEAASVGLEDLVEAWGRREKMRSDTLDGDDLTRPSTITQHEQDDHVDRAAIDAKSDASGSSNKSLTPPETAPTTDTLSETAVGDISSVDVDYWTRRCVPIIGSLLKSCRVYSEAERETQLRFLQEHVLPNLGPRPSSPGSQIQSMATFSGFPLQPSINLSGSGQAKVRYTFEPLDSLSGTEVDPFALAPAQRVLEKLSTLLGVWPGWIDALIAAYHPTREEVEQLHPNLHEYLRGVLVRTTGRQDVQVPPMPRMWVCFVALDLEGASQALKVYFDPKIKEAVTGIPSCKYTCQILRTVDRFGNAKAVDMLEQFLAEEHSIGAVELIAIDCVPEEMQPSARIKVYVHTMSNSFQTVRKYMTMGGRCMDPATLEGLENLHDVWYSLLGESQGIVNEEYSKPLTGFSSMQHHLYFSYEMTPGNADPGVKVYIPVQSYAPDDKTIAQNYEANFRQLNWPWGEPGVYEAVIESALGPVKHSRATFLHGGSSFIFSKGRGVYQSIYLDPPLEEGGNIAVFEHHDDQDTIVDLGNM</sequence>
<keyword id="KW-0460">Magnesium</keyword>
<keyword id="KW-0479">Metal-binding</keyword>
<keyword id="KW-0808">Transferase</keyword>
<proteinExistence type="evidence at transcript level"/>
<reference key="1">
    <citation type="journal article" date="2006" name="Fungal Genet. Biol.">
        <title>A complex gene cluster for indole-diterpene biosynthesis in the grass endophyte Neotyphodium lolii.</title>
        <authorList>
            <person name="Young C.A."/>
            <person name="Felitti S."/>
            <person name="Shields K."/>
            <person name="Spangenberg G."/>
            <person name="Johnson R.D."/>
            <person name="Bryan G.T."/>
            <person name="Saikia S."/>
            <person name="Scott B."/>
        </authorList>
    </citation>
    <scope>NUCLEOTIDE SEQUENCE [GENOMIC DNA]</scope>
    <source>
        <strain>Lp19</strain>
    </source>
</reference>
<reference key="2">
    <citation type="journal article" date="2005" name="Mol. Genet. Genomics">
        <title>Molecular cloning and genetic analysis of a symbiosis-expressed gene cluster for lolitrem biosynthesis from a mutualistic endophyte of perennial ryegrass.</title>
        <authorList>
            <person name="Young C.A."/>
            <person name="Bryant M.K."/>
            <person name="Christensen M.J."/>
            <person name="Tapper B.A."/>
            <person name="Bryan G.T."/>
            <person name="Scott B."/>
        </authorList>
    </citation>
    <scope>FUNCTION</scope>
    <source>
        <strain>Lp19</strain>
    </source>
</reference>
<reference key="3">
    <citation type="journal article" date="2010" name="Plant Physiol.">
        <title>Disruption of signaling in a fungal-grass symbiosis leads to pathogenesis.</title>
        <authorList>
            <person name="Eaton C.J."/>
            <person name="Cox M.P."/>
            <person name="Ambrose B."/>
            <person name="Becker M."/>
            <person name="Hesse U."/>
            <person name="Schardl C.L."/>
            <person name="Scott B."/>
        </authorList>
    </citation>
    <scope>INDUCTION</scope>
</reference>
<reference key="4">
    <citation type="journal article" date="2012" name="FEBS Lett.">
        <title>Functional analysis of an indole-diterpene gene cluster for lolitrem B biosynthesis in the grass endosymbiont Epichloe festucae.</title>
        <authorList>
            <person name="Saikia S."/>
            <person name="Takemoto D."/>
            <person name="Tapper B.A."/>
            <person name="Lane G.A."/>
            <person name="Fraser K."/>
            <person name="Scott B."/>
        </authorList>
    </citation>
    <scope>FUNCTION</scope>
    <scope>DISRUPTION PHENOTYPE</scope>
    <scope>PATHWAY</scope>
</reference>
<feature type="chain" id="PRO_0000444325" description="Multi-functional prenyltransferase ltmE">
    <location>
        <begin position="1"/>
        <end position="788"/>
    </location>
</feature>
<feature type="region of interest" description="Disordered" evidence="3">
    <location>
        <begin position="283"/>
        <end position="337"/>
    </location>
</feature>
<feature type="compositionally biased region" description="Basic and acidic residues" evidence="3">
    <location>
        <begin position="299"/>
        <end position="314"/>
    </location>
</feature>
<feature type="compositionally biased region" description="Polar residues" evidence="3">
    <location>
        <begin position="316"/>
        <end position="337"/>
    </location>
</feature>
<feature type="binding site" evidence="1">
    <location>
        <position position="18"/>
    </location>
    <ligand>
        <name>substrate</name>
    </ligand>
</feature>
<feature type="binding site" evidence="1">
    <location>
        <position position="51"/>
    </location>
    <ligand>
        <name>substrate</name>
    </ligand>
</feature>
<feature type="binding site" evidence="1">
    <location>
        <position position="58"/>
    </location>
    <ligand>
        <name>Mg(2+)</name>
        <dbReference type="ChEBI" id="CHEBI:18420"/>
        <label>1</label>
    </ligand>
</feature>
<feature type="binding site" evidence="1">
    <location>
        <position position="58"/>
    </location>
    <ligand>
        <name>Mg(2+)</name>
        <dbReference type="ChEBI" id="CHEBI:18420"/>
        <label>2</label>
    </ligand>
</feature>
<feature type="binding site" evidence="1">
    <location>
        <position position="67"/>
    </location>
    <ligand>
        <name>substrate</name>
    </ligand>
</feature>
<feature type="binding site" evidence="1">
    <location>
        <position position="151"/>
    </location>
    <ligand>
        <name>substrate</name>
    </ligand>
</feature>
<feature type="binding site" evidence="1">
    <location>
        <position position="152"/>
    </location>
    <ligand>
        <name>substrate</name>
    </ligand>
</feature>
<feature type="binding site" evidence="1">
    <location>
        <position position="182"/>
    </location>
    <ligand>
        <name>substrate</name>
    </ligand>
</feature>
<feature type="binding site" evidence="1">
    <location>
        <position position="189"/>
    </location>
    <ligand>
        <name>substrate</name>
    </ligand>
</feature>
<feature type="binding site" evidence="1">
    <location>
        <position position="199"/>
    </location>
    <ligand>
        <name>substrate</name>
    </ligand>
</feature>
<feature type="binding site" evidence="2">
    <location>
        <begin position="404"/>
        <end position="405"/>
    </location>
    <ligand>
        <name>L-tryptophan</name>
        <dbReference type="ChEBI" id="CHEBI:57912"/>
    </ligand>
</feature>
<feature type="binding site" evidence="2">
    <location>
        <position position="427"/>
    </location>
    <ligand>
        <name>substrate</name>
    </ligand>
</feature>
<feature type="binding site" evidence="2">
    <location>
        <position position="599"/>
    </location>
    <ligand>
        <name>substrate</name>
    </ligand>
</feature>
<feature type="binding site" evidence="2">
    <location>
        <position position="601"/>
    </location>
    <ligand>
        <name>substrate</name>
    </ligand>
</feature>
<feature type="binding site" evidence="2">
    <location>
        <position position="603"/>
    </location>
    <ligand>
        <name>substrate</name>
    </ligand>
</feature>
<feature type="binding site" evidence="2">
    <location>
        <position position="687"/>
    </location>
    <ligand>
        <name>substrate</name>
    </ligand>
</feature>
<name>LTME_EPIFI</name>
<accession>Q15FB7</accession>
<dbReference type="EC" id="2.5.1.-" evidence="10"/>
<dbReference type="EMBL" id="DQ443465">
    <property type="protein sequence ID" value="ABF20220.1"/>
    <property type="molecule type" value="Genomic_DNA"/>
</dbReference>
<dbReference type="SMR" id="Q15FB7"/>
<dbReference type="GO" id="GO:0046872">
    <property type="term" value="F:metal ion binding"/>
    <property type="evidence" value="ECO:0007669"/>
    <property type="project" value="UniProtKB-KW"/>
</dbReference>
<dbReference type="GO" id="GO:0004659">
    <property type="term" value="F:prenyltransferase activity"/>
    <property type="evidence" value="ECO:0007669"/>
    <property type="project" value="InterPro"/>
</dbReference>
<dbReference type="GO" id="GO:0046165">
    <property type="term" value="P:alcohol biosynthetic process"/>
    <property type="evidence" value="ECO:0007669"/>
    <property type="project" value="UniProtKB-ARBA"/>
</dbReference>
<dbReference type="GO" id="GO:0009820">
    <property type="term" value="P:alkaloid metabolic process"/>
    <property type="evidence" value="ECO:0007669"/>
    <property type="project" value="InterPro"/>
</dbReference>
<dbReference type="GO" id="GO:0008299">
    <property type="term" value="P:isoprenoid biosynthetic process"/>
    <property type="evidence" value="ECO:0007669"/>
    <property type="project" value="InterPro"/>
</dbReference>
<dbReference type="GO" id="GO:0043386">
    <property type="term" value="P:mycotoxin biosynthetic process"/>
    <property type="evidence" value="ECO:0007669"/>
    <property type="project" value="UniProtKB-ARBA"/>
</dbReference>
<dbReference type="CDD" id="cd13929">
    <property type="entry name" value="PT-DMATS_CymD"/>
    <property type="match status" value="1"/>
</dbReference>
<dbReference type="Gene3D" id="1.10.600.10">
    <property type="entry name" value="Farnesyl Diphosphate Synthase"/>
    <property type="match status" value="1"/>
</dbReference>
<dbReference type="InterPro" id="IPR033964">
    <property type="entry name" value="Aro_prenylTrfase"/>
</dbReference>
<dbReference type="InterPro" id="IPR017795">
    <property type="entry name" value="Aro_prenylTrfase_DMATS"/>
</dbReference>
<dbReference type="InterPro" id="IPR008949">
    <property type="entry name" value="Isoprenoid_synthase_dom_sf"/>
</dbReference>
<dbReference type="InterPro" id="IPR000092">
    <property type="entry name" value="Polyprenyl_synt"/>
</dbReference>
<dbReference type="NCBIfam" id="TIGR03429">
    <property type="entry name" value="arom_pren_DMATS"/>
    <property type="match status" value="1"/>
</dbReference>
<dbReference type="PANTHER" id="PTHR40627:SF5">
    <property type="entry name" value="INDOLE PRENYLTRANSFERASE TDIB"/>
    <property type="match status" value="1"/>
</dbReference>
<dbReference type="PANTHER" id="PTHR40627">
    <property type="entry name" value="INDOLE PRENYLTRANSFERASE TDIB-RELATED"/>
    <property type="match status" value="1"/>
</dbReference>
<dbReference type="Pfam" id="PF00348">
    <property type="entry name" value="polyprenyl_synt"/>
    <property type="match status" value="1"/>
</dbReference>
<dbReference type="Pfam" id="PF11991">
    <property type="entry name" value="Trp_DMAT"/>
    <property type="match status" value="1"/>
</dbReference>
<dbReference type="SFLD" id="SFLDS00036">
    <property type="entry name" value="Aromatic_Prenyltransferase"/>
    <property type="match status" value="1"/>
</dbReference>
<dbReference type="SUPFAM" id="SSF48576">
    <property type="entry name" value="Terpenoid synthases"/>
    <property type="match status" value="1"/>
</dbReference>
<gene>
    <name evidence="8" type="primary">ltmE</name>
</gene>
<protein>
    <recommendedName>
        <fullName evidence="8">Multi-functional prenyltransferase ltmE</fullName>
        <ecNumber evidence="10">2.5.1.-</ecNumber>
    </recommendedName>
    <alternativeName>
        <fullName evidence="8">Lolitrem B biosynthesis cluster 3 protein E</fullName>
    </alternativeName>
</protein>
<organism>
    <name type="scientific">Epichloe festucae var. lolii</name>
    <name type="common">Neotyphodium lolii</name>
    <name type="synonym">Acremonium lolii</name>
    <dbReference type="NCBI Taxonomy" id="73839"/>
    <lineage>
        <taxon>Eukaryota</taxon>
        <taxon>Fungi</taxon>
        <taxon>Dikarya</taxon>
        <taxon>Ascomycota</taxon>
        <taxon>Pezizomycotina</taxon>
        <taxon>Sordariomycetes</taxon>
        <taxon>Hypocreomycetidae</taxon>
        <taxon>Hypocreales</taxon>
        <taxon>Clavicipitaceae</taxon>
        <taxon>Epichloe</taxon>
    </lineage>
</organism>
<comment type="function">
    <text evidence="4 5 7">Multi-functional prenyltransferase; part of the gene cluster that mediates the biosynthesis of lolitrems, indole-diterpene mycotoxins that are potent tremorgens in mammals, and are synthesized by clavicipitaceous fungal endophytes in association with their grass hosts (PubMed:16765617, PubMed:22750140). The geranylgeranyl diphosphate (GGPP) synthase ltmG is proposed to catalyze the first step in lolitrem biosynthesis (PubMed:15991026, PubMed:16765617). LtmG catalyzes a series of iterative condensations of isopentenyl diphosphate (IPP) with dimethylallyl diphosphate (DMAPP), geranyl diphosphate (GPP), and farnesyl diphosphate (FPP), to form GGPP (PubMed:15991026, PubMed:16765617). GGPP then condenses with indole-3-glycerol phosphate to form 3-geranylgeranylindole, an acyclic intermediate, to be incorporated into paxilline (PubMed:16765617). Either ltmG or ltmC could be responsible for this step, as both are putative prenyl transferases (PubMed:16765617). The FAD-dependent monooxygenase ltmM then catalyzes the epoxidation of the two terminal alkenes of the geranylgeranyl moiety, which is subsequently cyclized by ltmB, to paspaline (PubMed:15991026, PubMed:16765617). The cytochrome P450 monooxygenases ltmQ and ltmP can sequentially oxidize paspaline to terpendole E and terpendole F (PubMed:22750140). Alternatively, ltmP converts paspaline to an intermediate which is oxidized by ltmQ to terpendole F (PubMed:22750140). LtmF, ltmK, ltmE and ltmJ appear to be unique to the epichloe endophytes (PubMed:15991026, PubMed:16765617). The prenyltransferase ltmF is involved in the 27-hydroxyl-O-prenylation (PubMed:22750140). The cytochrome P450 monooxygenase ltmK is required for the oxidative acetal ring formation (PubMed:22750140). The multi-functional prenyltransferase ltmE is required for C20- and C21-prenylations of the indole ring of paspalanes and acts together with the cytochrome P450 monooxygenase ltmJ to yield lolitremanes by multiple oxidations and ring closures (PubMed:22750140). The stereoisomer pairs of lolitriol and lolitrem N or lolitrem B and lolitrem F may be attributed to variations in the way in which ring closure can occur under the action of ltmJ (PubMed:22750140). While the major product of this pathway is lolitrem B, the prenyl transferases and cytochrome P450 monooxygenases identified in this pathway have a remarkable versatility in their regio- and stereo-specificities to generate a diverse range of metabolites that are products of a metabolic grid rather than a linear pathway (PubMed:22750140).</text>
</comment>
<comment type="cofactor">
    <cofactor evidence="1">
        <name>Mg(2+)</name>
        <dbReference type="ChEBI" id="CHEBI:18420"/>
    </cofactor>
    <text evidence="1">Binds 3 Mg(2+) ions per subunit.</text>
</comment>
<comment type="pathway">
    <text evidence="7">Secondary metabolite biosynthesis.</text>
</comment>
<comment type="induction">
    <text evidence="6">Expression is down-regulated when the stress-activated mitogen-activated protein kinase (sakA) is deleted (PubMed:20519633).</text>
</comment>
<comment type="disruption phenotype">
    <text evidence="7">Does not produce lolitremanes but accumulates both simple and O-prenylated paspalanes (PubMed:22750140).</text>
</comment>
<comment type="similarity">
    <text evidence="9">In the N-terminal section; belongs to the FPP/GGPP synthase family.</text>
</comment>
<comment type="similarity">
    <text evidence="9">In the C-terminal section; belongs to the tryptophan dimethylallyltransferase family.</text>
</comment>
<evidence type="ECO:0000250" key="1">
    <source>
        <dbReference type="UniProtKB" id="Q12051"/>
    </source>
</evidence>
<evidence type="ECO:0000250" key="2">
    <source>
        <dbReference type="UniProtKB" id="Q50EL0"/>
    </source>
</evidence>
<evidence type="ECO:0000256" key="3">
    <source>
        <dbReference type="SAM" id="MobiDB-lite"/>
    </source>
</evidence>
<evidence type="ECO:0000269" key="4">
    <source>
    </source>
</evidence>
<evidence type="ECO:0000269" key="5">
    <source>
    </source>
</evidence>
<evidence type="ECO:0000269" key="6">
    <source>
    </source>
</evidence>
<evidence type="ECO:0000269" key="7">
    <source>
    </source>
</evidence>
<evidence type="ECO:0000303" key="8">
    <source>
    </source>
</evidence>
<evidence type="ECO:0000305" key="9"/>
<evidence type="ECO:0000305" key="10">
    <source>
    </source>
</evidence>